<comment type="function">
    <text evidence="2">Is a positive regulator of nascent focal adhesion assembly, involved in the modulation of endothelial cell attachment to the extracellular matrix.</text>
</comment>
<comment type="subunit">
    <text evidence="2">Part of a complex composed of THSD1, PTK2/FAK1, TLN1 and VCL. Interacts with TLN1.</text>
</comment>
<comment type="subcellular location">
    <subcellularLocation>
        <location evidence="2">Endosome membrane</location>
        <topology evidence="6">Single-pass type I membrane protein</topology>
    </subcellularLocation>
    <subcellularLocation>
        <location evidence="2">Cell junction</location>
        <location evidence="2">Focal adhesion</location>
    </subcellularLocation>
    <text evidence="2">Localizes to nascent focal adhesions.</text>
</comment>
<feature type="signal peptide" evidence="3">
    <location>
        <begin position="1"/>
        <end position="24"/>
    </location>
</feature>
<feature type="chain" id="PRO_0000249586" description="Thrombospondin type-1 domain-containing protein 1">
    <location>
        <begin position="25"/>
        <end position="853"/>
    </location>
</feature>
<feature type="topological domain" description="Extracellular" evidence="3">
    <location>
        <begin position="25"/>
        <end position="414"/>
    </location>
</feature>
<feature type="transmembrane region" description="Helical" evidence="3">
    <location>
        <begin position="415"/>
        <end position="435"/>
    </location>
</feature>
<feature type="topological domain" description="Cytoplasmic" evidence="3">
    <location>
        <begin position="436"/>
        <end position="853"/>
    </location>
</feature>
<feature type="domain" description="TSP type-1" evidence="4">
    <location>
        <begin position="341"/>
        <end position="394"/>
    </location>
</feature>
<feature type="region of interest" description="Disordered" evidence="5">
    <location>
        <begin position="445"/>
        <end position="518"/>
    </location>
</feature>
<feature type="region of interest" description="Disordered" evidence="5">
    <location>
        <begin position="624"/>
        <end position="650"/>
    </location>
</feature>
<feature type="region of interest" description="Disordered" evidence="5">
    <location>
        <begin position="668"/>
        <end position="702"/>
    </location>
</feature>
<feature type="region of interest" description="Disordered" evidence="5">
    <location>
        <begin position="714"/>
        <end position="800"/>
    </location>
</feature>
<feature type="compositionally biased region" description="Polar residues" evidence="5">
    <location>
        <begin position="671"/>
        <end position="686"/>
    </location>
</feature>
<feature type="compositionally biased region" description="Basic and acidic residues" evidence="5">
    <location>
        <begin position="687"/>
        <end position="697"/>
    </location>
</feature>
<feature type="compositionally biased region" description="Polar residues" evidence="5">
    <location>
        <begin position="767"/>
        <end position="795"/>
    </location>
</feature>
<feature type="modified residue" description="Phosphoserine" evidence="1">
    <location>
        <position position="464"/>
    </location>
</feature>
<feature type="glycosylation site" description="N-linked (GlcNAc...) asparagine" evidence="3">
    <location>
        <position position="39"/>
    </location>
</feature>
<feature type="glycosylation site" description="N-linked (GlcNAc...) asparagine" evidence="3">
    <location>
        <position position="53"/>
    </location>
</feature>
<feature type="glycosylation site" description="N-linked (GlcNAc...) asparagine" evidence="3">
    <location>
        <position position="58"/>
    </location>
</feature>
<feature type="glycosylation site" description="N-linked (GlcNAc...) asparagine" evidence="3">
    <location>
        <position position="69"/>
    </location>
</feature>
<feature type="glycosylation site" description="N-linked (GlcNAc...) asparagine" evidence="3">
    <location>
        <position position="80"/>
    </location>
</feature>
<feature type="glycosylation site" description="N-linked (GlcNAc...) asparagine" evidence="3">
    <location>
        <position position="135"/>
    </location>
</feature>
<feature type="glycosylation site" description="N-linked (GlcNAc...) asparagine" evidence="3">
    <location>
        <position position="304"/>
    </location>
</feature>
<feature type="disulfide bond" evidence="4">
    <location>
        <begin position="353"/>
        <end position="388"/>
    </location>
</feature>
<feature type="disulfide bond" evidence="4">
    <location>
        <begin position="357"/>
        <end position="393"/>
    </location>
</feature>
<feature type="disulfide bond" evidence="4">
    <location>
        <begin position="368"/>
        <end position="378"/>
    </location>
</feature>
<name>THSD1_PONAB</name>
<evidence type="ECO:0000250" key="1">
    <source>
        <dbReference type="UniProtKB" id="Q9JM61"/>
    </source>
</evidence>
<evidence type="ECO:0000250" key="2">
    <source>
        <dbReference type="UniProtKB" id="Q9NS62"/>
    </source>
</evidence>
<evidence type="ECO:0000255" key="3"/>
<evidence type="ECO:0000255" key="4">
    <source>
        <dbReference type="PROSITE-ProRule" id="PRU00210"/>
    </source>
</evidence>
<evidence type="ECO:0000256" key="5">
    <source>
        <dbReference type="SAM" id="MobiDB-lite"/>
    </source>
</evidence>
<evidence type="ECO:0000305" key="6"/>
<proteinExistence type="evidence at transcript level"/>
<keyword id="KW-0965">Cell junction</keyword>
<keyword id="KW-1015">Disulfide bond</keyword>
<keyword id="KW-0967">Endosome</keyword>
<keyword id="KW-0325">Glycoprotein</keyword>
<keyword id="KW-0472">Membrane</keyword>
<keyword id="KW-0597">Phosphoprotein</keyword>
<keyword id="KW-1185">Reference proteome</keyword>
<keyword id="KW-0732">Signal</keyword>
<keyword id="KW-0812">Transmembrane</keyword>
<keyword id="KW-1133">Transmembrane helix</keyword>
<protein>
    <recommendedName>
        <fullName>Thrombospondin type-1 domain-containing protein 1</fullName>
    </recommendedName>
</protein>
<dbReference type="EMBL" id="CR860043">
    <property type="protein sequence ID" value="CAH92193.1"/>
    <property type="molecule type" value="mRNA"/>
</dbReference>
<dbReference type="RefSeq" id="NP_001126283.1">
    <property type="nucleotide sequence ID" value="NM_001132811.1"/>
</dbReference>
<dbReference type="FunCoup" id="Q5R7R7">
    <property type="interactions" value="120"/>
</dbReference>
<dbReference type="STRING" id="9601.ENSPPYP00000006140"/>
<dbReference type="GlyCosmos" id="Q5R7R7">
    <property type="glycosylation" value="7 sites, No reported glycans"/>
</dbReference>
<dbReference type="GeneID" id="100173258"/>
<dbReference type="KEGG" id="pon:100173258"/>
<dbReference type="CTD" id="55901"/>
<dbReference type="eggNOG" id="ENOG502QY3P">
    <property type="taxonomic scope" value="Eukaryota"/>
</dbReference>
<dbReference type="InParanoid" id="Q5R7R7"/>
<dbReference type="OrthoDB" id="16692at2759"/>
<dbReference type="Proteomes" id="UP000001595">
    <property type="component" value="Unplaced"/>
</dbReference>
<dbReference type="GO" id="GO:0071944">
    <property type="term" value="C:cell periphery"/>
    <property type="evidence" value="ECO:0007669"/>
    <property type="project" value="TreeGrafter"/>
</dbReference>
<dbReference type="GO" id="GO:0005768">
    <property type="term" value="C:endosome"/>
    <property type="evidence" value="ECO:0000250"/>
    <property type="project" value="UniProtKB"/>
</dbReference>
<dbReference type="GO" id="GO:0010008">
    <property type="term" value="C:endosome membrane"/>
    <property type="evidence" value="ECO:0007669"/>
    <property type="project" value="UniProtKB-SubCell"/>
</dbReference>
<dbReference type="GO" id="GO:0005925">
    <property type="term" value="C:focal adhesion"/>
    <property type="evidence" value="ECO:0000250"/>
    <property type="project" value="UniProtKB"/>
</dbReference>
<dbReference type="GO" id="GO:0050840">
    <property type="term" value="F:extracellular matrix binding"/>
    <property type="evidence" value="ECO:0000250"/>
    <property type="project" value="UniProtKB"/>
</dbReference>
<dbReference type="GO" id="GO:0048041">
    <property type="term" value="P:focal adhesion assembly"/>
    <property type="evidence" value="ECO:0000250"/>
    <property type="project" value="UniProtKB"/>
</dbReference>
<dbReference type="FunFam" id="2.20.100.10:FF:000115">
    <property type="entry name" value="Thrombospondin type-1 domain-containing protein 1"/>
    <property type="match status" value="1"/>
</dbReference>
<dbReference type="Gene3D" id="2.20.100.10">
    <property type="entry name" value="Thrombospondin type-1 (TSP1) repeat"/>
    <property type="match status" value="1"/>
</dbReference>
<dbReference type="InterPro" id="IPR038877">
    <property type="entry name" value="THSD1"/>
</dbReference>
<dbReference type="InterPro" id="IPR056218">
    <property type="entry name" value="THSD1_D2"/>
</dbReference>
<dbReference type="InterPro" id="IPR056219">
    <property type="entry name" value="THSD1_D3"/>
</dbReference>
<dbReference type="InterPro" id="IPR056217">
    <property type="entry name" value="THSD1_N"/>
</dbReference>
<dbReference type="InterPro" id="IPR000884">
    <property type="entry name" value="TSP1_rpt"/>
</dbReference>
<dbReference type="InterPro" id="IPR036383">
    <property type="entry name" value="TSP1_rpt_sf"/>
</dbReference>
<dbReference type="PANTHER" id="PTHR16311">
    <property type="entry name" value="THROMBOSPONDIN TYPE I DOMAIN-CONTAINING 1"/>
    <property type="match status" value="1"/>
</dbReference>
<dbReference type="PANTHER" id="PTHR16311:SF3">
    <property type="entry name" value="THROMBOSPONDIN TYPE-1 DOMAIN-CONTAINING PROTEIN 1"/>
    <property type="match status" value="1"/>
</dbReference>
<dbReference type="Pfam" id="PF24310">
    <property type="entry name" value="THSD1_D2"/>
    <property type="match status" value="1"/>
</dbReference>
<dbReference type="Pfam" id="PF24311">
    <property type="entry name" value="THSD1_D3"/>
    <property type="match status" value="1"/>
</dbReference>
<dbReference type="Pfam" id="PF24306">
    <property type="entry name" value="THSD1_N"/>
    <property type="match status" value="1"/>
</dbReference>
<dbReference type="Pfam" id="PF00090">
    <property type="entry name" value="TSP_1"/>
    <property type="match status" value="1"/>
</dbReference>
<dbReference type="SMART" id="SM00209">
    <property type="entry name" value="TSP1"/>
    <property type="match status" value="1"/>
</dbReference>
<dbReference type="SUPFAM" id="SSF82895">
    <property type="entry name" value="TSP-1 type 1 repeat"/>
    <property type="match status" value="1"/>
</dbReference>
<dbReference type="PROSITE" id="PS50092">
    <property type="entry name" value="TSP1"/>
    <property type="match status" value="1"/>
</dbReference>
<organism>
    <name type="scientific">Pongo abelii</name>
    <name type="common">Sumatran orangutan</name>
    <name type="synonym">Pongo pygmaeus abelii</name>
    <dbReference type="NCBI Taxonomy" id="9601"/>
    <lineage>
        <taxon>Eukaryota</taxon>
        <taxon>Metazoa</taxon>
        <taxon>Chordata</taxon>
        <taxon>Craniata</taxon>
        <taxon>Vertebrata</taxon>
        <taxon>Euteleostomi</taxon>
        <taxon>Mammalia</taxon>
        <taxon>Eutheria</taxon>
        <taxon>Euarchontoglires</taxon>
        <taxon>Primates</taxon>
        <taxon>Haplorrhini</taxon>
        <taxon>Catarrhini</taxon>
        <taxon>Hominidae</taxon>
        <taxon>Pongo</taxon>
    </lineage>
</organism>
<sequence>MKPMLKDFSNLLLVVLCDYVLGEAEYLLLREPGHVALSNDTVYVDFQYFDGANGTLRNVSVLLLEANTNQTVTTKYLLTNQSQGTLKFECFYFKEAGDYWFTMTPEATDNSTPFPWWEKSAFLKVEWPVFHVDLNRSAKAAEGTFQVGLFTSQPLCPFPVDKPNIVVDVIFTNSLPEARRNSRQPLEIRTSKRTELAQGQWVEFGCAPVGPEAYVTVVLKLLGRDSVITSTGPIGLAQKFGYKLVMVPELTCESGVEVMVLPPPCTFVQGVVTVFKEAPRSPGKRTIHLAENSLPLGERRTIFNCTLFDMGKNKYCFDFGISSRSHFSAKEKECMLIQRNIETWGLWQPWSQCSATCGDGVRERRRVCLTSFPSRPGCPGMSLEASLCSLEECAAFQPSSPSPLQPQGPVKSNNIVTVTGISLCLFIIIATVLITLWRRFGRPAKCSTPARHNSIHSPSFRKNSDEENICELSEQRGSFSDGGDGPTGSPGDTGIPLTYRRSGPVPPEDDASGSESFQSNAQKIIPPLFSYRLAQQQLKEMKKKGLTETTKVYHVSQSPLTDTAIDAAPSAPLDLESPEEAAANKFRIKSPFPEQPAVSAGERPPSRLDLSVTQASCAISPSQTLIRKSQARHVGSRGGPSERSHARNAHFRRTASFHEARQARPFRERSMSTLTPRQAPAYSTRTRTCEQAEDRFRPQSRGAHLFPEKLEHFQEASGTGGPLNPLPKSYTLGQPLRKPDLGDRQAGLVAGIERTEPHRARRGPSPSHKSVSRKQSSPTSPKDSYQRVSPLSPSQCRKDKCQSFPTHPEFAFYDNTSFGLTEAEQRMLDLPGYFGSNEEDETTSTLSVEKLVI</sequence>
<reference key="1">
    <citation type="submission" date="2004-11" db="EMBL/GenBank/DDBJ databases">
        <authorList>
            <consortium name="The German cDNA consortium"/>
        </authorList>
    </citation>
    <scope>NUCLEOTIDE SEQUENCE [LARGE SCALE MRNA]</scope>
    <source>
        <tissue>Liver</tissue>
    </source>
</reference>
<gene>
    <name type="primary">THSD1</name>
</gene>
<accession>Q5R7R7</accession>